<sequence length="364" mass="40574">MAQQWSLQRLAGRHPQDSYEDSTQSSIFTYTNSNSTRGPFEGPNYHIAPRWVYHLTSVWMIFVVTASVFTNGLVLAATMKFKKLRHPLNWILVNLAVADLAETVIASTISIVNQVSGYFVLGHPMCVLEGYTVSLCGITGLWSLAIISWERWMVVCKPFGNVRFDAKLAIVGIAFSWIWAAVWTAPPIFGWSRYWPHGLKTSCGPDVFSGSSYPGVQSYMIVLMVTCCIIPLAIIMLCYLQVWLAIRAVAKQQKESESTQKAEKEVTRMVVVMIFAYCVCWGPYTFFACFAAANPGYAFHPLMAALPAYFAKSATIYNPVIYVFMNRQFRNCILQLFGKKVDDGSELSSASKTEVSSVSSVSPA</sequence>
<organism>
    <name type="scientific">Homo sapiens</name>
    <name type="common">Human</name>
    <dbReference type="NCBI Taxonomy" id="9606"/>
    <lineage>
        <taxon>Eukaryota</taxon>
        <taxon>Metazoa</taxon>
        <taxon>Chordata</taxon>
        <taxon>Craniata</taxon>
        <taxon>Vertebrata</taxon>
        <taxon>Euteleostomi</taxon>
        <taxon>Mammalia</taxon>
        <taxon>Eutheria</taxon>
        <taxon>Euarchontoglires</taxon>
        <taxon>Primates</taxon>
        <taxon>Haplorrhini</taxon>
        <taxon>Catarrhini</taxon>
        <taxon>Hominidae</taxon>
        <taxon>Homo</taxon>
    </lineage>
</organism>
<comment type="function">
    <text>Visual pigments are the light-absorbing molecules that mediate vision. They consist of an apoprotein, opsin, covalently linked to cis-retinal.</text>
</comment>
<comment type="biophysicochemical properties">
    <absorption>
        <max>560 nm</max>
    </absorption>
</comment>
<comment type="interaction">
    <interactant intactId="EBI-13294781">
        <id>P04000</id>
    </interactant>
    <interactant intactId="EBI-10262547">
        <id>Q8IXM6</id>
        <label>NRM</label>
    </interactant>
    <organismsDiffer>false</organismsDiffer>
    <experiments>3</experiments>
</comment>
<comment type="interaction">
    <interactant intactId="EBI-13294781">
        <id>P04000</id>
    </interactant>
    <interactant intactId="EBI-11988865">
        <id>A5PKU2</id>
        <label>TUSC5</label>
    </interactant>
    <organismsDiffer>false</organismsDiffer>
    <experiments>3</experiments>
</comment>
<comment type="subcellular location">
    <subcellularLocation>
        <location>Membrane</location>
        <topology>Multi-pass membrane protein</topology>
    </subcellularLocation>
</comment>
<comment type="tissue specificity">
    <text>The three color pigments are found in the cone photoreceptor cells.</text>
</comment>
<comment type="PTM">
    <text>Phosphorylated on some or all of the serine and threonine residues present in the C-terminal region.</text>
</comment>
<comment type="disease" evidence="6">
    <disease id="DI-02145">
        <name>Colorblindness, partial, protan series</name>
        <acronym>CBP</acronym>
        <description>A color vision defect characterized by a dichromasy in which red and green are confused, with loss of luminance and shift of brightness and hue curves toward the short wave end of the spectrum. Dichromasy is due to the use of only two types of photoreceptors, blue plus red in deuteranopia and blue plus green in protanopia.</description>
        <dbReference type="MIM" id="303900"/>
    </disease>
    <text>The disease is caused by variants affecting the gene represented in this entry.</text>
</comment>
<comment type="disease" evidence="10 11">
    <disease id="DI-02866">
        <name>Blue cone monochromacy</name>
        <acronym>BCM</acronym>
        <description>A rare X-linked congenital stationary cone dysfunction syndrome characterized by the absence of functional long wavelength-sensitive and medium wavelength-sensitive cones in the retina. Color discrimination is severely impaired from birth, and vision is derived from the remaining preserved blue (S) cones and rod photoreceptors. BCM typically presents with reduced visual acuity, pendular nystagmus, and photophobia. Patients often have myopia.</description>
        <dbReference type="MIM" id="303700"/>
    </disease>
    <text>The disease is caused by variants affecting the gene represented in this entry.</text>
</comment>
<comment type="similarity">
    <text evidence="4">Belongs to the G-protein coupled receptor 1 family. Opsin subfamily.</text>
</comment>
<dbReference type="EMBL" id="M13305">
    <property type="protein sequence ID" value="AAB59524.1"/>
    <property type="molecule type" value="Genomic_DNA"/>
</dbReference>
<dbReference type="EMBL" id="M13300">
    <property type="protein sequence ID" value="AAB59524.1"/>
    <property type="status" value="JOINED"/>
    <property type="molecule type" value="Genomic_DNA"/>
</dbReference>
<dbReference type="EMBL" id="M13301">
    <property type="protein sequence ID" value="AAB59524.1"/>
    <property type="status" value="JOINED"/>
    <property type="molecule type" value="Genomic_DNA"/>
</dbReference>
<dbReference type="EMBL" id="M13302">
    <property type="protein sequence ID" value="AAB59524.1"/>
    <property type="status" value="JOINED"/>
    <property type="molecule type" value="Genomic_DNA"/>
</dbReference>
<dbReference type="EMBL" id="M13303">
    <property type="protein sequence ID" value="AAB59524.1"/>
    <property type="status" value="JOINED"/>
    <property type="molecule type" value="Genomic_DNA"/>
</dbReference>
<dbReference type="EMBL" id="M13304">
    <property type="protein sequence ID" value="AAB59524.1"/>
    <property type="status" value="JOINED"/>
    <property type="molecule type" value="Genomic_DNA"/>
</dbReference>
<dbReference type="EMBL" id="Z68193">
    <property type="protein sequence ID" value="CAA92342.1"/>
    <property type="molecule type" value="Genomic_DNA"/>
</dbReference>
<dbReference type="CCDS" id="CCDS14742.1"/>
<dbReference type="PIR" id="A03157">
    <property type="entry name" value="OOHUR"/>
</dbReference>
<dbReference type="RefSeq" id="NP_064445.2">
    <property type="nucleotide sequence ID" value="NM_020061.6"/>
</dbReference>
<dbReference type="PDB" id="8IU2">
    <property type="method" value="EM"/>
    <property type="resolution" value="3.35 A"/>
    <property type="chains" value="R=1-364"/>
</dbReference>
<dbReference type="PDBsum" id="8IU2"/>
<dbReference type="EMDB" id="EMD-35714"/>
<dbReference type="SMR" id="P04000"/>
<dbReference type="FunCoup" id="P04000">
    <property type="interactions" value="306"/>
</dbReference>
<dbReference type="IntAct" id="P04000">
    <property type="interactions" value="3"/>
</dbReference>
<dbReference type="STRING" id="9606.ENSP00000358967"/>
<dbReference type="ChEMBL" id="CHEMBL1949482"/>
<dbReference type="TCDB" id="9.A.14.1.1">
    <property type="family name" value="the g-protein-coupled receptor (gpcr) family"/>
</dbReference>
<dbReference type="GlyCosmos" id="P04000">
    <property type="glycosylation" value="2 sites, No reported glycans"/>
</dbReference>
<dbReference type="GlyGen" id="P04000">
    <property type="glycosylation" value="2 sites"/>
</dbReference>
<dbReference type="BioMuta" id="OPN1LW"/>
<dbReference type="DMDM" id="129219"/>
<dbReference type="MassIVE" id="P04000"/>
<dbReference type="PaxDb" id="9606-ENSP00000358967"/>
<dbReference type="PeptideAtlas" id="P04000"/>
<dbReference type="Antibodypedia" id="64269">
    <property type="antibodies" value="46 antibodies from 10 providers"/>
</dbReference>
<dbReference type="DNASU" id="5956"/>
<dbReference type="Ensembl" id="ENST00000369951.9">
    <property type="protein sequence ID" value="ENSP00000358967.4"/>
    <property type="gene ID" value="ENSG00000102076.10"/>
</dbReference>
<dbReference type="GeneID" id="5956"/>
<dbReference type="KEGG" id="hsa:5956"/>
<dbReference type="MANE-Select" id="ENST00000369951.9">
    <property type="protein sequence ID" value="ENSP00000358967.4"/>
    <property type="RefSeq nucleotide sequence ID" value="NM_020061.6"/>
    <property type="RefSeq protein sequence ID" value="NP_064445.2"/>
</dbReference>
<dbReference type="UCSC" id="uc033fax.1">
    <property type="organism name" value="human"/>
</dbReference>
<dbReference type="AGR" id="HGNC:9936"/>
<dbReference type="CTD" id="5956"/>
<dbReference type="DisGeNET" id="5956"/>
<dbReference type="GeneCards" id="OPN1LW"/>
<dbReference type="HGNC" id="HGNC:9936">
    <property type="gene designation" value="OPN1LW"/>
</dbReference>
<dbReference type="HPA" id="ENSG00000102076">
    <property type="expression patterns" value="Tissue enriched (retina)"/>
</dbReference>
<dbReference type="MalaCards" id="OPN1LW"/>
<dbReference type="MIM" id="300822">
    <property type="type" value="gene"/>
</dbReference>
<dbReference type="MIM" id="303700">
    <property type="type" value="phenotype"/>
</dbReference>
<dbReference type="MIM" id="303900">
    <property type="type" value="phenotype"/>
</dbReference>
<dbReference type="neXtProt" id="NX_P04000"/>
<dbReference type="OpenTargets" id="ENSG00000102076"/>
<dbReference type="Orphanet" id="16">
    <property type="disease" value="Blue cone monochromatism"/>
</dbReference>
<dbReference type="Orphanet" id="1872">
    <property type="disease" value="Cone rod dystrophy"/>
</dbReference>
<dbReference type="Orphanet" id="90001">
    <property type="disease" value="X-linked cone dysfunction syndrome with myopia"/>
</dbReference>
<dbReference type="PharmGKB" id="PA31936"/>
<dbReference type="VEuPathDB" id="HostDB:ENSG00000102076"/>
<dbReference type="eggNOG" id="KOG3656">
    <property type="taxonomic scope" value="Eukaryota"/>
</dbReference>
<dbReference type="GeneTree" id="ENSGT01030000234549"/>
<dbReference type="HOGENOM" id="CLU_009579_3_0_1"/>
<dbReference type="InParanoid" id="P04000"/>
<dbReference type="OMA" id="EWGKQSF"/>
<dbReference type="OrthoDB" id="8545112at2759"/>
<dbReference type="PAN-GO" id="P04000">
    <property type="GO annotations" value="6 GO annotations based on evolutionary models"/>
</dbReference>
<dbReference type="PhylomeDB" id="P04000"/>
<dbReference type="TreeFam" id="TF324998"/>
<dbReference type="PathwayCommons" id="P04000"/>
<dbReference type="Reactome" id="R-HSA-2187335">
    <property type="pathway name" value="The retinoid cycle in cones (daylight vision)"/>
</dbReference>
<dbReference type="Reactome" id="R-HSA-418594">
    <property type="pathway name" value="G alpha (i) signalling events"/>
</dbReference>
<dbReference type="Reactome" id="R-HSA-419771">
    <property type="pathway name" value="Opsins"/>
</dbReference>
<dbReference type="Reactome" id="R-HSA-9918450">
    <property type="pathway name" value="Defective visual phototransduction due to OPN1LW loss of function"/>
</dbReference>
<dbReference type="SignaLink" id="P04000"/>
<dbReference type="ChiTaRS" id="OPN1LW">
    <property type="organism name" value="human"/>
</dbReference>
<dbReference type="Pharos" id="P04000">
    <property type="development level" value="Tbio"/>
</dbReference>
<dbReference type="PRO" id="PR:P04000"/>
<dbReference type="Proteomes" id="UP000005640">
    <property type="component" value="Chromosome X"/>
</dbReference>
<dbReference type="RNAct" id="P04000">
    <property type="molecule type" value="protein"/>
</dbReference>
<dbReference type="Bgee" id="ENSG00000102076">
    <property type="expression patterns" value="Expressed in ganglionic eminence and 9 other cell types or tissues"/>
</dbReference>
<dbReference type="ExpressionAtlas" id="P04000">
    <property type="expression patterns" value="baseline and differential"/>
</dbReference>
<dbReference type="GO" id="GO:0097381">
    <property type="term" value="C:photoreceptor disc membrane"/>
    <property type="evidence" value="ECO:0000304"/>
    <property type="project" value="Reactome"/>
</dbReference>
<dbReference type="GO" id="GO:0001750">
    <property type="term" value="C:photoreceptor outer segment"/>
    <property type="evidence" value="ECO:0000318"/>
    <property type="project" value="GO_Central"/>
</dbReference>
<dbReference type="GO" id="GO:0005886">
    <property type="term" value="C:plasma membrane"/>
    <property type="evidence" value="ECO:0000318"/>
    <property type="project" value="GO_Central"/>
</dbReference>
<dbReference type="GO" id="GO:0008020">
    <property type="term" value="F:G protein-coupled photoreceptor activity"/>
    <property type="evidence" value="ECO:0000318"/>
    <property type="project" value="GO_Central"/>
</dbReference>
<dbReference type="GO" id="GO:0009881">
    <property type="term" value="F:photoreceptor activity"/>
    <property type="evidence" value="ECO:0000315"/>
    <property type="project" value="CACAO"/>
</dbReference>
<dbReference type="GO" id="GO:0071482">
    <property type="term" value="P:cellular response to light stimulus"/>
    <property type="evidence" value="ECO:0000318"/>
    <property type="project" value="GO_Central"/>
</dbReference>
<dbReference type="GO" id="GO:0007186">
    <property type="term" value="P:G protein-coupled receptor signaling pathway"/>
    <property type="evidence" value="ECO:0000318"/>
    <property type="project" value="GO_Central"/>
</dbReference>
<dbReference type="GO" id="GO:0007602">
    <property type="term" value="P:phototransduction"/>
    <property type="evidence" value="ECO:0000318"/>
    <property type="project" value="GO_Central"/>
</dbReference>
<dbReference type="GO" id="GO:0032467">
    <property type="term" value="P:positive regulation of cytokinesis"/>
    <property type="evidence" value="ECO:0000315"/>
    <property type="project" value="UniProtKB"/>
</dbReference>
<dbReference type="GO" id="GO:0007165">
    <property type="term" value="P:signal transduction"/>
    <property type="evidence" value="ECO:0000304"/>
    <property type="project" value="ProtInc"/>
</dbReference>
<dbReference type="GO" id="GO:0007601">
    <property type="term" value="P:visual perception"/>
    <property type="evidence" value="ECO:0000304"/>
    <property type="project" value="ProtInc"/>
</dbReference>
<dbReference type="CDD" id="cd15081">
    <property type="entry name" value="7tmA_LWS_opsin"/>
    <property type="match status" value="1"/>
</dbReference>
<dbReference type="FunFam" id="1.20.1070.10:FF:000090">
    <property type="entry name" value="Long-wave-sensitive opsin 1"/>
    <property type="match status" value="1"/>
</dbReference>
<dbReference type="Gene3D" id="1.20.1070.10">
    <property type="entry name" value="Rhodopsin 7-helix transmembrane proteins"/>
    <property type="match status" value="1"/>
</dbReference>
<dbReference type="InterPro" id="IPR050125">
    <property type="entry name" value="GPCR_opsins"/>
</dbReference>
<dbReference type="InterPro" id="IPR000276">
    <property type="entry name" value="GPCR_Rhodpsn"/>
</dbReference>
<dbReference type="InterPro" id="IPR017452">
    <property type="entry name" value="GPCR_Rhodpsn_7TM"/>
</dbReference>
<dbReference type="InterPro" id="IPR001760">
    <property type="entry name" value="Opsin"/>
</dbReference>
<dbReference type="InterPro" id="IPR000378">
    <property type="entry name" value="Opsin_red/grn"/>
</dbReference>
<dbReference type="InterPro" id="IPR027430">
    <property type="entry name" value="Retinal_BS"/>
</dbReference>
<dbReference type="PANTHER" id="PTHR24240">
    <property type="entry name" value="OPSIN"/>
    <property type="match status" value="1"/>
</dbReference>
<dbReference type="Pfam" id="PF00001">
    <property type="entry name" value="7tm_1"/>
    <property type="match status" value="1"/>
</dbReference>
<dbReference type="PRINTS" id="PR00237">
    <property type="entry name" value="GPCRRHODOPSN"/>
</dbReference>
<dbReference type="PRINTS" id="PR00238">
    <property type="entry name" value="OPSIN"/>
</dbReference>
<dbReference type="PRINTS" id="PR00575">
    <property type="entry name" value="OPSINREDGRN"/>
</dbReference>
<dbReference type="SUPFAM" id="SSF81321">
    <property type="entry name" value="Family A G protein-coupled receptor-like"/>
    <property type="match status" value="1"/>
</dbReference>
<dbReference type="PROSITE" id="PS00237">
    <property type="entry name" value="G_PROTEIN_RECEP_F1_1"/>
    <property type="match status" value="1"/>
</dbReference>
<dbReference type="PROSITE" id="PS50262">
    <property type="entry name" value="G_PROTEIN_RECEP_F1_2"/>
    <property type="match status" value="1"/>
</dbReference>
<dbReference type="PROSITE" id="PS00238">
    <property type="entry name" value="OPSIN"/>
    <property type="match status" value="1"/>
</dbReference>
<keyword id="KW-0002">3D-structure</keyword>
<keyword id="KW-0157">Chromophore</keyword>
<keyword id="KW-0225">Disease variant</keyword>
<keyword id="KW-1015">Disulfide bond</keyword>
<keyword id="KW-0297">G-protein coupled receptor</keyword>
<keyword id="KW-0325">Glycoprotein</keyword>
<keyword id="KW-0472">Membrane</keyword>
<keyword id="KW-0597">Phosphoprotein</keyword>
<keyword id="KW-0600">Photoreceptor protein</keyword>
<keyword id="KW-0675">Receptor</keyword>
<keyword id="KW-1185">Reference proteome</keyword>
<keyword id="KW-0681">Retinal protein</keyword>
<keyword id="KW-0716">Sensory transduction</keyword>
<keyword id="KW-0807">Transducer</keyword>
<keyword id="KW-0812">Transmembrane</keyword>
<keyword id="KW-1133">Transmembrane helix</keyword>
<keyword id="KW-0844">Vision</keyword>
<gene>
    <name type="primary">OPN1LW</name>
    <name type="synonym">RCP</name>
</gene>
<reference key="1">
    <citation type="journal article" date="1986" name="Science">
        <title>Molecular genetics of human color vision: the genes encoding blue, green, and red pigments.</title>
        <authorList>
            <person name="Nathans J."/>
            <person name="Thomas D."/>
            <person name="Hogness D.S."/>
        </authorList>
    </citation>
    <scope>NUCLEOTIDE SEQUENCE [GENOMIC DNA]</scope>
    <scope>VARIANTS LEU-153 AND SER-180</scope>
    <source>
        <tissue>Retinal cone cell</tissue>
    </source>
</reference>
<reference key="2">
    <citation type="journal article" date="2005" name="Nature">
        <title>The DNA sequence of the human X chromosome.</title>
        <authorList>
            <person name="Ross M.T."/>
            <person name="Grafham D.V."/>
            <person name="Coffey A.J."/>
            <person name="Scherer S."/>
            <person name="McLay K."/>
            <person name="Muzny D."/>
            <person name="Platzer M."/>
            <person name="Howell G.R."/>
            <person name="Burrows C."/>
            <person name="Bird C.P."/>
            <person name="Frankish A."/>
            <person name="Lovell F.L."/>
            <person name="Howe K.L."/>
            <person name="Ashurst J.L."/>
            <person name="Fulton R.S."/>
            <person name="Sudbrak R."/>
            <person name="Wen G."/>
            <person name="Jones M.C."/>
            <person name="Hurles M.E."/>
            <person name="Andrews T.D."/>
            <person name="Scott C.E."/>
            <person name="Searle S."/>
            <person name="Ramser J."/>
            <person name="Whittaker A."/>
            <person name="Deadman R."/>
            <person name="Carter N.P."/>
            <person name="Hunt S.E."/>
            <person name="Chen R."/>
            <person name="Cree A."/>
            <person name="Gunaratne P."/>
            <person name="Havlak P."/>
            <person name="Hodgson A."/>
            <person name="Metzker M.L."/>
            <person name="Richards S."/>
            <person name="Scott G."/>
            <person name="Steffen D."/>
            <person name="Sodergren E."/>
            <person name="Wheeler D.A."/>
            <person name="Worley K.C."/>
            <person name="Ainscough R."/>
            <person name="Ambrose K.D."/>
            <person name="Ansari-Lari M.A."/>
            <person name="Aradhya S."/>
            <person name="Ashwell R.I."/>
            <person name="Babbage A.K."/>
            <person name="Bagguley C.L."/>
            <person name="Ballabio A."/>
            <person name="Banerjee R."/>
            <person name="Barker G.E."/>
            <person name="Barlow K.F."/>
            <person name="Barrett I.P."/>
            <person name="Bates K.N."/>
            <person name="Beare D.M."/>
            <person name="Beasley H."/>
            <person name="Beasley O."/>
            <person name="Beck A."/>
            <person name="Bethel G."/>
            <person name="Blechschmidt K."/>
            <person name="Brady N."/>
            <person name="Bray-Allen S."/>
            <person name="Bridgeman A.M."/>
            <person name="Brown A.J."/>
            <person name="Brown M.J."/>
            <person name="Bonnin D."/>
            <person name="Bruford E.A."/>
            <person name="Buhay C."/>
            <person name="Burch P."/>
            <person name="Burford D."/>
            <person name="Burgess J."/>
            <person name="Burrill W."/>
            <person name="Burton J."/>
            <person name="Bye J.M."/>
            <person name="Carder C."/>
            <person name="Carrel L."/>
            <person name="Chako J."/>
            <person name="Chapman J.C."/>
            <person name="Chavez D."/>
            <person name="Chen E."/>
            <person name="Chen G."/>
            <person name="Chen Y."/>
            <person name="Chen Z."/>
            <person name="Chinault C."/>
            <person name="Ciccodicola A."/>
            <person name="Clark S.Y."/>
            <person name="Clarke G."/>
            <person name="Clee C.M."/>
            <person name="Clegg S."/>
            <person name="Clerc-Blankenburg K."/>
            <person name="Clifford K."/>
            <person name="Cobley V."/>
            <person name="Cole C.G."/>
            <person name="Conquer J.S."/>
            <person name="Corby N."/>
            <person name="Connor R.E."/>
            <person name="David R."/>
            <person name="Davies J."/>
            <person name="Davis C."/>
            <person name="Davis J."/>
            <person name="Delgado O."/>
            <person name="Deshazo D."/>
            <person name="Dhami P."/>
            <person name="Ding Y."/>
            <person name="Dinh H."/>
            <person name="Dodsworth S."/>
            <person name="Draper H."/>
            <person name="Dugan-Rocha S."/>
            <person name="Dunham A."/>
            <person name="Dunn M."/>
            <person name="Durbin K.J."/>
            <person name="Dutta I."/>
            <person name="Eades T."/>
            <person name="Ellwood M."/>
            <person name="Emery-Cohen A."/>
            <person name="Errington H."/>
            <person name="Evans K.L."/>
            <person name="Faulkner L."/>
            <person name="Francis F."/>
            <person name="Frankland J."/>
            <person name="Fraser A.E."/>
            <person name="Galgoczy P."/>
            <person name="Gilbert J."/>
            <person name="Gill R."/>
            <person name="Gloeckner G."/>
            <person name="Gregory S.G."/>
            <person name="Gribble S."/>
            <person name="Griffiths C."/>
            <person name="Grocock R."/>
            <person name="Gu Y."/>
            <person name="Gwilliam R."/>
            <person name="Hamilton C."/>
            <person name="Hart E.A."/>
            <person name="Hawes A."/>
            <person name="Heath P.D."/>
            <person name="Heitmann K."/>
            <person name="Hennig S."/>
            <person name="Hernandez J."/>
            <person name="Hinzmann B."/>
            <person name="Ho S."/>
            <person name="Hoffs M."/>
            <person name="Howden P.J."/>
            <person name="Huckle E.J."/>
            <person name="Hume J."/>
            <person name="Hunt P.J."/>
            <person name="Hunt A.R."/>
            <person name="Isherwood J."/>
            <person name="Jacob L."/>
            <person name="Johnson D."/>
            <person name="Jones S."/>
            <person name="de Jong P.J."/>
            <person name="Joseph S.S."/>
            <person name="Keenan S."/>
            <person name="Kelly S."/>
            <person name="Kershaw J.K."/>
            <person name="Khan Z."/>
            <person name="Kioschis P."/>
            <person name="Klages S."/>
            <person name="Knights A.J."/>
            <person name="Kosiura A."/>
            <person name="Kovar-Smith C."/>
            <person name="Laird G.K."/>
            <person name="Langford C."/>
            <person name="Lawlor S."/>
            <person name="Leversha M."/>
            <person name="Lewis L."/>
            <person name="Liu W."/>
            <person name="Lloyd C."/>
            <person name="Lloyd D.M."/>
            <person name="Loulseged H."/>
            <person name="Loveland J.E."/>
            <person name="Lovell J.D."/>
            <person name="Lozado R."/>
            <person name="Lu J."/>
            <person name="Lyne R."/>
            <person name="Ma J."/>
            <person name="Maheshwari M."/>
            <person name="Matthews L.H."/>
            <person name="McDowall J."/>
            <person name="McLaren S."/>
            <person name="McMurray A."/>
            <person name="Meidl P."/>
            <person name="Meitinger T."/>
            <person name="Milne S."/>
            <person name="Miner G."/>
            <person name="Mistry S.L."/>
            <person name="Morgan M."/>
            <person name="Morris S."/>
            <person name="Mueller I."/>
            <person name="Mullikin J.C."/>
            <person name="Nguyen N."/>
            <person name="Nordsiek G."/>
            <person name="Nyakatura G."/>
            <person name="O'dell C.N."/>
            <person name="Okwuonu G."/>
            <person name="Palmer S."/>
            <person name="Pandian R."/>
            <person name="Parker D."/>
            <person name="Parrish J."/>
            <person name="Pasternak S."/>
            <person name="Patel D."/>
            <person name="Pearce A.V."/>
            <person name="Pearson D.M."/>
            <person name="Pelan S.E."/>
            <person name="Perez L."/>
            <person name="Porter K.M."/>
            <person name="Ramsey Y."/>
            <person name="Reichwald K."/>
            <person name="Rhodes S."/>
            <person name="Ridler K.A."/>
            <person name="Schlessinger D."/>
            <person name="Schueler M.G."/>
            <person name="Sehra H.K."/>
            <person name="Shaw-Smith C."/>
            <person name="Shen H."/>
            <person name="Sheridan E.M."/>
            <person name="Shownkeen R."/>
            <person name="Skuce C.D."/>
            <person name="Smith M.L."/>
            <person name="Sotheran E.C."/>
            <person name="Steingruber H.E."/>
            <person name="Steward C.A."/>
            <person name="Storey R."/>
            <person name="Swann R.M."/>
            <person name="Swarbreck D."/>
            <person name="Tabor P.E."/>
            <person name="Taudien S."/>
            <person name="Taylor T."/>
            <person name="Teague B."/>
            <person name="Thomas K."/>
            <person name="Thorpe A."/>
            <person name="Timms K."/>
            <person name="Tracey A."/>
            <person name="Trevanion S."/>
            <person name="Tromans A.C."/>
            <person name="d'Urso M."/>
            <person name="Verduzco D."/>
            <person name="Villasana D."/>
            <person name="Waldron L."/>
            <person name="Wall M."/>
            <person name="Wang Q."/>
            <person name="Warren J."/>
            <person name="Warry G.L."/>
            <person name="Wei X."/>
            <person name="West A."/>
            <person name="Whitehead S.L."/>
            <person name="Whiteley M.N."/>
            <person name="Wilkinson J.E."/>
            <person name="Willey D.L."/>
            <person name="Williams G."/>
            <person name="Williams L."/>
            <person name="Williamson A."/>
            <person name="Williamson H."/>
            <person name="Wilming L."/>
            <person name="Woodmansey R.L."/>
            <person name="Wray P.W."/>
            <person name="Yen J."/>
            <person name="Zhang J."/>
            <person name="Zhou J."/>
            <person name="Zoghbi H."/>
            <person name="Zorilla S."/>
            <person name="Buck D."/>
            <person name="Reinhardt R."/>
            <person name="Poustka A."/>
            <person name="Rosenthal A."/>
            <person name="Lehrach H."/>
            <person name="Meindl A."/>
            <person name="Minx P.J."/>
            <person name="Hillier L.W."/>
            <person name="Willard H.F."/>
            <person name="Wilson R.K."/>
            <person name="Waterston R.H."/>
            <person name="Rice C.M."/>
            <person name="Vaudin M."/>
            <person name="Coulson A."/>
            <person name="Nelson D.L."/>
            <person name="Weinstock G."/>
            <person name="Sulston J.E."/>
            <person name="Durbin R.M."/>
            <person name="Hubbard T."/>
            <person name="Gibbs R.A."/>
            <person name="Beck S."/>
            <person name="Rogers J."/>
            <person name="Bentley D.R."/>
        </authorList>
    </citation>
    <scope>NUCLEOTIDE SEQUENCE [LARGE SCALE GENOMIC DNA]</scope>
    <scope>VARIANTS LEU-153 AND SER-180</scope>
</reference>
<reference key="3">
    <citation type="journal article" date="1986" name="Vision Res.">
        <title>Molecular biology of the visual pigments.</title>
        <authorList>
            <person name="Applebury M.L."/>
            <person name="Hargrave P.A."/>
        </authorList>
    </citation>
    <scope>REVIEW</scope>
</reference>
<reference key="4">
    <citation type="journal article" date="1992" name="Nature">
        <title>Polymorphism in red photopigment underlies variation in colour matching.</title>
        <authorList>
            <person name="Winderickx J."/>
            <person name="Lindsey D.T."/>
            <person name="Sanocki E."/>
            <person name="Teller D.Y."/>
            <person name="Motulsky A.G."/>
            <person name="Deeb S.S."/>
        </authorList>
    </citation>
    <scope>VARIANT SER-180</scope>
</reference>
<reference key="5">
    <citation type="journal article" date="1993" name="Am. J. Hum. Genet.">
        <title>Genetic heterogeneity among blue-cone monochromats.</title>
        <authorList>
            <person name="Nathans J."/>
            <person name="Maumenee I.H."/>
            <person name="Zrenner E."/>
            <person name="Sadowski B."/>
            <person name="Sharpe L.T."/>
            <person name="Lewis R.A."/>
            <person name="Hansen E."/>
            <person name="Rosenberg T."/>
            <person name="Schwartz M."/>
            <person name="Heckenlively J.R."/>
        </authorList>
    </citation>
    <scope>VARIANTS BCM ARG-203 AND LEU-307</scope>
</reference>
<reference key="6">
    <citation type="journal article" date="1995" name="Genomics">
        <title>Gene conversion between red and defective green opsin gene in blue cone monochromacy.</title>
        <authorList>
            <person name="Reyniers E."/>
            <person name="Van Thienen M.N."/>
            <person name="Meire F."/>
            <person name="De Boulle K."/>
            <person name="Devries K."/>
            <person name="Kestelijn P."/>
            <person name="Willems P.J."/>
        </authorList>
    </citation>
    <scope>VARIANT BCM ARG-203</scope>
</reference>
<reference key="7">
    <citation type="journal article" date="2002" name="Biochem. Biophys. Res. Commun.">
        <title>Novel missense mutations in red/green opsin genes in congenital color-vision deficiencies.</title>
        <authorList>
            <person name="Ueyama H."/>
            <person name="Kuwayama S."/>
            <person name="Imai H."/>
            <person name="Tanabe S."/>
            <person name="Oda S."/>
            <person name="Nishida Y."/>
            <person name="Wada A."/>
            <person name="Shichida Y."/>
            <person name="Yamade S."/>
        </authorList>
    </citation>
    <scope>VARIANT CBP GLU-338</scope>
</reference>
<proteinExistence type="evidence at protein level"/>
<protein>
    <recommendedName>
        <fullName>Long-wave-sensitive opsin 1</fullName>
    </recommendedName>
    <alternativeName>
        <fullName>Red cone photoreceptor pigment</fullName>
    </alternativeName>
    <alternativeName>
        <fullName>Red-sensitive opsin</fullName>
        <shortName>ROP</shortName>
    </alternativeName>
</protein>
<evidence type="ECO:0000250" key="1">
    <source>
        <dbReference type="UniProtKB" id="Q9BGI7"/>
    </source>
</evidence>
<evidence type="ECO:0000255" key="2"/>
<evidence type="ECO:0000255" key="3">
    <source>
        <dbReference type="PROSITE-ProRule" id="PRU00498"/>
    </source>
</evidence>
<evidence type="ECO:0000255" key="4">
    <source>
        <dbReference type="PROSITE-ProRule" id="PRU00521"/>
    </source>
</evidence>
<evidence type="ECO:0000256" key="5">
    <source>
        <dbReference type="SAM" id="MobiDB-lite"/>
    </source>
</evidence>
<evidence type="ECO:0000269" key="6">
    <source>
    </source>
</evidence>
<evidence type="ECO:0000269" key="7">
    <source>
    </source>
</evidence>
<evidence type="ECO:0000269" key="8">
    <source>
    </source>
</evidence>
<evidence type="ECO:0000269" key="9">
    <source>
    </source>
</evidence>
<evidence type="ECO:0000269" key="10">
    <source>
    </source>
</evidence>
<evidence type="ECO:0000269" key="11">
    <source>
    </source>
</evidence>
<evidence type="ECO:0007829" key="12">
    <source>
        <dbReference type="PDB" id="8IU2"/>
    </source>
</evidence>
<feature type="chain" id="PRO_0000197802" description="Long-wave-sensitive opsin 1">
    <location>
        <begin position="1"/>
        <end position="364"/>
    </location>
</feature>
<feature type="topological domain" description="Extracellular">
    <location>
        <begin position="1"/>
        <end position="52"/>
    </location>
</feature>
<feature type="transmembrane region" description="Helical; Name=1" evidence="2">
    <location>
        <begin position="53"/>
        <end position="77"/>
    </location>
</feature>
<feature type="topological domain" description="Cytoplasmic">
    <location>
        <begin position="78"/>
        <end position="89"/>
    </location>
</feature>
<feature type="transmembrane region" description="Helical; Name=2" evidence="2">
    <location>
        <begin position="90"/>
        <end position="115"/>
    </location>
</feature>
<feature type="topological domain" description="Extracellular">
    <location>
        <begin position="116"/>
        <end position="129"/>
    </location>
</feature>
<feature type="transmembrane region" description="Helical; Name=3" evidence="2">
    <location>
        <begin position="130"/>
        <end position="149"/>
    </location>
</feature>
<feature type="topological domain" description="Cytoplasmic">
    <location>
        <begin position="150"/>
        <end position="168"/>
    </location>
</feature>
<feature type="transmembrane region" description="Helical; Name=4" evidence="2">
    <location>
        <begin position="169"/>
        <end position="192"/>
    </location>
</feature>
<feature type="topological domain" description="Extracellular">
    <location>
        <begin position="193"/>
        <end position="218"/>
    </location>
</feature>
<feature type="transmembrane region" description="Helical; Name=5" evidence="2">
    <location>
        <begin position="219"/>
        <end position="246"/>
    </location>
</feature>
<feature type="topological domain" description="Cytoplasmic">
    <location>
        <begin position="247"/>
        <end position="268"/>
    </location>
</feature>
<feature type="transmembrane region" description="Helical; Name=6" evidence="2">
    <location>
        <begin position="269"/>
        <end position="292"/>
    </location>
</feature>
<feature type="topological domain" description="Extracellular">
    <location>
        <begin position="293"/>
        <end position="300"/>
    </location>
</feature>
<feature type="transmembrane region" description="Helical; Name=7" evidence="2">
    <location>
        <begin position="301"/>
        <end position="325"/>
    </location>
</feature>
<feature type="topological domain" description="Cytoplasmic">
    <location>
        <begin position="326"/>
        <end position="364"/>
    </location>
</feature>
<feature type="region of interest" description="Disordered" evidence="5">
    <location>
        <begin position="1"/>
        <end position="23"/>
    </location>
</feature>
<feature type="modified residue" description="N6-(retinylidene)lysine">
    <location>
        <position position="312"/>
    </location>
</feature>
<feature type="glycosylation site" description="O-linked (GlcNAc) serine" evidence="1">
    <location>
        <position position="22"/>
    </location>
</feature>
<feature type="glycosylation site" description="N-linked (GlcNAc...) asparagine" evidence="3">
    <location>
        <position position="34"/>
    </location>
</feature>
<feature type="disulfide bond" evidence="4">
    <location>
        <begin position="126"/>
        <end position="203"/>
    </location>
</feature>
<feature type="sequence variant" id="VAR_012010" description="In dbSNP:rs1065421.">
    <original>I</original>
    <variation>V</variation>
    <location>
        <position position="111"/>
    </location>
</feature>
<feature type="sequence variant" id="VAR_012011" description="In dbSNP:rs1065422.">
    <original>S</original>
    <variation>Y</variation>
    <location>
        <position position="116"/>
    </location>
</feature>
<feature type="sequence variant" id="VAR_012012" description="In dbSNP:rs713." evidence="8 9">
    <original>M</original>
    <variation>L</variation>
    <location>
        <position position="153"/>
    </location>
</feature>
<feature type="sequence variant" id="VAR_004842" description="In 62% of the population; dbSNP:rs1557157655." evidence="7 8 9">
    <original>A</original>
    <variation>S</variation>
    <location>
        <position position="180"/>
    </location>
</feature>
<feature type="sequence variant" id="VAR_009298" description="In BCM; dbSNP:rs121434621." evidence="10 11">
    <original>C</original>
    <variation>R</variation>
    <location>
        <position position="203"/>
    </location>
</feature>
<feature type="sequence variant" id="VAR_012014" description="In dbSNP:rs148583295.">
    <original>I</original>
    <variation>T</variation>
    <location>
        <position position="230"/>
    </location>
</feature>
<feature type="sequence variant" id="VAR_050612" description="In dbSNP:rs2315122.">
    <original>I</original>
    <variation>V</variation>
    <location>
        <position position="274"/>
    </location>
</feature>
<feature type="sequence variant" id="VAR_012015" description="In dbSNP:rs1065440.">
    <original>A</original>
    <variation>P</variation>
    <location>
        <position position="298"/>
    </location>
</feature>
<feature type="sequence variant" id="VAR_009299" description="In BCM; dbSNP:rs782797093." evidence="10">
    <original>P</original>
    <variation>L</variation>
    <location>
        <position position="307"/>
    </location>
</feature>
<feature type="sequence variant" id="VAR_064054" description="In CBP; dbSNP:rs104894913." evidence="6">
    <original>G</original>
    <variation>E</variation>
    <location>
        <position position="338"/>
    </location>
</feature>
<feature type="turn" evidence="12">
    <location>
        <begin position="39"/>
        <end position="41"/>
    </location>
</feature>
<feature type="turn" evidence="12">
    <location>
        <begin position="45"/>
        <end position="47"/>
    </location>
</feature>
<feature type="helix" evidence="12">
    <location>
        <begin position="50"/>
        <end position="80"/>
    </location>
</feature>
<feature type="strand" evidence="12">
    <location>
        <begin position="82"/>
        <end position="84"/>
    </location>
</feature>
<feature type="helix" evidence="12">
    <location>
        <begin position="90"/>
        <end position="116"/>
    </location>
</feature>
<feature type="helix" evidence="12">
    <location>
        <begin position="123"/>
        <end position="156"/>
    </location>
</feature>
<feature type="helix" evidence="12">
    <location>
        <begin position="166"/>
        <end position="184"/>
    </location>
</feature>
<feature type="helix" evidence="12">
    <location>
        <begin position="186"/>
        <end position="189"/>
    </location>
</feature>
<feature type="strand" evidence="12">
    <location>
        <begin position="194"/>
        <end position="197"/>
    </location>
</feature>
<feature type="turn" evidence="12">
    <location>
        <begin position="198"/>
        <end position="201"/>
    </location>
</feature>
<feature type="strand" evidence="12">
    <location>
        <begin position="202"/>
        <end position="206"/>
    </location>
</feature>
<feature type="helix" evidence="12">
    <location>
        <begin position="216"/>
        <end position="227"/>
    </location>
</feature>
<feature type="helix" evidence="12">
    <location>
        <begin position="229"/>
        <end position="252"/>
    </location>
</feature>
<feature type="helix" evidence="12">
    <location>
        <begin position="257"/>
        <end position="293"/>
    </location>
</feature>
<feature type="strand" evidence="12">
    <location>
        <begin position="294"/>
        <end position="296"/>
    </location>
</feature>
<feature type="helix" evidence="12">
    <location>
        <begin position="301"/>
        <end position="322"/>
    </location>
</feature>
<feature type="turn" evidence="12">
    <location>
        <begin position="323"/>
        <end position="325"/>
    </location>
</feature>
<feature type="helix" evidence="12">
    <location>
        <begin position="327"/>
        <end position="334"/>
    </location>
</feature>
<name>OPSR_HUMAN</name>
<accession>P04000</accession>